<keyword id="KW-0002">3D-structure</keyword>
<keyword id="KW-0045">Antibiotic biosynthesis</keyword>
<keyword id="KW-0436">Ligase</keyword>
<keyword id="KW-0596">Phosphopantetheine</keyword>
<keyword id="KW-0597">Phosphoprotein</keyword>
<keyword id="KW-1185">Reference proteome</keyword>
<keyword id="KW-0677">Repeat</keyword>
<reference key="1">
    <citation type="journal article" date="1998" name="Microbiology">
        <title>Dihydroaeruginoic acid synthetase and pyochelin synthetase, products of the pchEF genes, are induced by extracellular pyochelin in Pseudomonas aeruginosa.</title>
        <authorList>
            <person name="Reimmann C."/>
            <person name="Serino L."/>
            <person name="Beyeler M."/>
            <person name="Haas D."/>
        </authorList>
    </citation>
    <scope>NUCLEOTIDE SEQUENCE [GENOMIC DNA]</scope>
    <scope>FUNCTION</scope>
    <scope>PATHWAY</scope>
    <scope>INDUCTION</scope>
    <scope>DISRUPTION PHENOTYPE</scope>
    <source>
        <strain>ATCC 15692 / DSM 22644 / CIP 104116 / JCM 14847 / LMG 12228 / 1C / PRS 101 / PAO1</strain>
    </source>
</reference>
<reference key="2">
    <citation type="journal article" date="2000" name="Nature">
        <title>Complete genome sequence of Pseudomonas aeruginosa PAO1, an opportunistic pathogen.</title>
        <authorList>
            <person name="Stover C.K."/>
            <person name="Pham X.-Q.T."/>
            <person name="Erwin A.L."/>
            <person name="Mizoguchi S.D."/>
            <person name="Warrener P."/>
            <person name="Hickey M.J."/>
            <person name="Brinkman F.S.L."/>
            <person name="Hufnagle W.O."/>
            <person name="Kowalik D.J."/>
            <person name="Lagrou M."/>
            <person name="Garber R.L."/>
            <person name="Goltry L."/>
            <person name="Tolentino E."/>
            <person name="Westbrock-Wadman S."/>
            <person name="Yuan Y."/>
            <person name="Brody L.L."/>
            <person name="Coulter S.N."/>
            <person name="Folger K.R."/>
            <person name="Kas A."/>
            <person name="Larbig K."/>
            <person name="Lim R.M."/>
            <person name="Smith K.A."/>
            <person name="Spencer D.H."/>
            <person name="Wong G.K.-S."/>
            <person name="Wu Z."/>
            <person name="Paulsen I.T."/>
            <person name="Reizer J."/>
            <person name="Saier M.H. Jr."/>
            <person name="Hancock R.E.W."/>
            <person name="Lory S."/>
            <person name="Olson M.V."/>
        </authorList>
    </citation>
    <scope>NUCLEOTIDE SEQUENCE [LARGE SCALE GENOMIC DNA]</scope>
    <source>
        <strain>ATCC 15692 / DSM 22644 / CIP 104116 / JCM 14847 / LMG 12228 / 1C / PRS 101 / PAO1</strain>
    </source>
</reference>
<reference key="3">
    <citation type="journal article" date="2001" name="J. Bacteriol.">
        <title>Essential PchG-dependent reduction in pyochelin biosynthesis of Pseudomonas aeruginosa.</title>
        <authorList>
            <person name="Reimmann C."/>
            <person name="Patel H.M."/>
            <person name="Serino L."/>
            <person name="Barone M."/>
            <person name="Walsh C.T."/>
            <person name="Haas D."/>
        </authorList>
    </citation>
    <scope>FUNCTION</scope>
    <scope>PATHWAY</scope>
    <source>
        <strain>ATCC 15692 / DSM 22644 / CIP 104116 / JCM 14847 / LMG 12228 / 1C / PRS 101 / PAO1</strain>
    </source>
</reference>
<dbReference type="EC" id="6.2.1.69" evidence="7"/>
<dbReference type="EMBL" id="AF074705">
    <property type="protein sequence ID" value="AAC83656.1"/>
    <property type="molecule type" value="Genomic_DNA"/>
</dbReference>
<dbReference type="EMBL" id="AE004091">
    <property type="protein sequence ID" value="AAG07614.1"/>
    <property type="molecule type" value="Genomic_DNA"/>
</dbReference>
<dbReference type="PIR" id="T17402">
    <property type="entry name" value="T17402"/>
</dbReference>
<dbReference type="RefSeq" id="NP_252916.1">
    <property type="nucleotide sequence ID" value="NC_002516.2"/>
</dbReference>
<dbReference type="RefSeq" id="WP_003148110.1">
    <property type="nucleotide sequence ID" value="NZ_QZGE01000028.1"/>
</dbReference>
<dbReference type="PDB" id="7EMY">
    <property type="method" value="EM"/>
    <property type="resolution" value="2.97 A"/>
    <property type="chains" value="A/B=1-1438"/>
</dbReference>
<dbReference type="PDB" id="7EN1">
    <property type="method" value="EM"/>
    <property type="resolution" value="3.47 A"/>
    <property type="chains" value="A/B=1-1438"/>
</dbReference>
<dbReference type="PDB" id="7EN2">
    <property type="method" value="EM"/>
    <property type="resolution" value="3.78 A"/>
    <property type="chains" value="A/B=1-1438"/>
</dbReference>
<dbReference type="PDBsum" id="7EMY"/>
<dbReference type="PDBsum" id="7EN1"/>
<dbReference type="PDBsum" id="7EN2"/>
<dbReference type="SMR" id="G3XCV2"/>
<dbReference type="FunCoup" id="G3XCV2">
    <property type="interactions" value="88"/>
</dbReference>
<dbReference type="STRING" id="208964.PA4226"/>
<dbReference type="PaxDb" id="208964-PA4226"/>
<dbReference type="GeneID" id="880048"/>
<dbReference type="KEGG" id="pae:PA4226"/>
<dbReference type="PATRIC" id="fig|208964.12.peg.4427"/>
<dbReference type="PseudoCAP" id="PA4226"/>
<dbReference type="HOGENOM" id="CLU_000022_40_2_6"/>
<dbReference type="InParanoid" id="G3XCV2"/>
<dbReference type="OrthoDB" id="9757559at2"/>
<dbReference type="PhylomeDB" id="G3XCV2"/>
<dbReference type="Proteomes" id="UP000002438">
    <property type="component" value="Chromosome"/>
</dbReference>
<dbReference type="GO" id="GO:0016874">
    <property type="term" value="F:ligase activity"/>
    <property type="evidence" value="ECO:0007669"/>
    <property type="project" value="UniProtKB-KW"/>
</dbReference>
<dbReference type="GO" id="GO:0031177">
    <property type="term" value="F:phosphopantetheine binding"/>
    <property type="evidence" value="ECO:0007669"/>
    <property type="project" value="InterPro"/>
</dbReference>
<dbReference type="GO" id="GO:0017000">
    <property type="term" value="P:antibiotic biosynthetic process"/>
    <property type="evidence" value="ECO:0007669"/>
    <property type="project" value="UniProtKB-KW"/>
</dbReference>
<dbReference type="CDD" id="cd12114">
    <property type="entry name" value="A_NRPS_TlmIV_like"/>
    <property type="match status" value="1"/>
</dbReference>
<dbReference type="CDD" id="cd19535">
    <property type="entry name" value="Cyc_NRPS"/>
    <property type="match status" value="1"/>
</dbReference>
<dbReference type="FunFam" id="1.10.1200.10:FF:000021">
    <property type="entry name" value="Isochorismatase"/>
    <property type="match status" value="1"/>
</dbReference>
<dbReference type="FunFam" id="1.10.1200.10:FF:000016">
    <property type="entry name" value="Non-ribosomal peptide synthase"/>
    <property type="match status" value="1"/>
</dbReference>
<dbReference type="FunFam" id="3.30.559.10:FF:000023">
    <property type="entry name" value="Non-ribosomal peptide synthetase"/>
    <property type="match status" value="1"/>
</dbReference>
<dbReference type="FunFam" id="3.40.50.12780:FF:000012">
    <property type="entry name" value="Non-ribosomal peptide synthetase"/>
    <property type="match status" value="1"/>
</dbReference>
<dbReference type="FunFam" id="3.30.559.30:FF:000006">
    <property type="entry name" value="Yersiniabactin polyketide/non-ribosomal peptide synthetase"/>
    <property type="match status" value="1"/>
</dbReference>
<dbReference type="Gene3D" id="3.30.300.30">
    <property type="match status" value="2"/>
</dbReference>
<dbReference type="Gene3D" id="1.10.1200.10">
    <property type="entry name" value="ACP-like"/>
    <property type="match status" value="2"/>
</dbReference>
<dbReference type="Gene3D" id="3.30.559.10">
    <property type="entry name" value="Chloramphenicol acetyltransferase-like domain"/>
    <property type="match status" value="1"/>
</dbReference>
<dbReference type="Gene3D" id="3.40.50.12780">
    <property type="entry name" value="N-terminal domain of ligase-like"/>
    <property type="match status" value="1"/>
</dbReference>
<dbReference type="Gene3D" id="3.30.559.30">
    <property type="entry name" value="Nonribosomal peptide synthetase, condensation domain"/>
    <property type="match status" value="1"/>
</dbReference>
<dbReference type="Gene3D" id="3.40.50.150">
    <property type="entry name" value="Vaccinia Virus protein VP39"/>
    <property type="match status" value="1"/>
</dbReference>
<dbReference type="InterPro" id="IPR010071">
    <property type="entry name" value="AA_adenyl_dom"/>
</dbReference>
<dbReference type="InterPro" id="IPR036736">
    <property type="entry name" value="ACP-like_sf"/>
</dbReference>
<dbReference type="InterPro" id="IPR045851">
    <property type="entry name" value="AMP-bd_C_sf"/>
</dbReference>
<dbReference type="InterPro" id="IPR020845">
    <property type="entry name" value="AMP-binding_CS"/>
</dbReference>
<dbReference type="InterPro" id="IPR000873">
    <property type="entry name" value="AMP-dep_synth/lig_dom"/>
</dbReference>
<dbReference type="InterPro" id="IPR042099">
    <property type="entry name" value="ANL_N_sf"/>
</dbReference>
<dbReference type="InterPro" id="IPR023213">
    <property type="entry name" value="CAT-like_dom_sf"/>
</dbReference>
<dbReference type="InterPro" id="IPR001242">
    <property type="entry name" value="Condensatn"/>
</dbReference>
<dbReference type="InterPro" id="IPR020806">
    <property type="entry name" value="PKS_PP-bd"/>
</dbReference>
<dbReference type="InterPro" id="IPR009081">
    <property type="entry name" value="PP-bd_ACP"/>
</dbReference>
<dbReference type="InterPro" id="IPR006162">
    <property type="entry name" value="Ppantetheine_attach_site"/>
</dbReference>
<dbReference type="InterPro" id="IPR029063">
    <property type="entry name" value="SAM-dependent_MTases_sf"/>
</dbReference>
<dbReference type="NCBIfam" id="TIGR01733">
    <property type="entry name" value="AA-adenyl-dom"/>
    <property type="match status" value="1"/>
</dbReference>
<dbReference type="PANTHER" id="PTHR45527">
    <property type="entry name" value="NONRIBOSOMAL PEPTIDE SYNTHETASE"/>
    <property type="match status" value="1"/>
</dbReference>
<dbReference type="PANTHER" id="PTHR45527:SF10">
    <property type="entry name" value="PYOCHELIN SYNTHASE PCHF"/>
    <property type="match status" value="1"/>
</dbReference>
<dbReference type="Pfam" id="PF00501">
    <property type="entry name" value="AMP-binding"/>
    <property type="match status" value="1"/>
</dbReference>
<dbReference type="Pfam" id="PF00668">
    <property type="entry name" value="Condensation"/>
    <property type="match status" value="1"/>
</dbReference>
<dbReference type="Pfam" id="PF00550">
    <property type="entry name" value="PP-binding"/>
    <property type="match status" value="2"/>
</dbReference>
<dbReference type="SMART" id="SM00823">
    <property type="entry name" value="PKS_PP"/>
    <property type="match status" value="1"/>
</dbReference>
<dbReference type="SUPFAM" id="SSF56801">
    <property type="entry name" value="Acetyl-CoA synthetase-like"/>
    <property type="match status" value="1"/>
</dbReference>
<dbReference type="SUPFAM" id="SSF47336">
    <property type="entry name" value="ACP-like"/>
    <property type="match status" value="2"/>
</dbReference>
<dbReference type="SUPFAM" id="SSF52777">
    <property type="entry name" value="CoA-dependent acyltransferases"/>
    <property type="match status" value="2"/>
</dbReference>
<dbReference type="SUPFAM" id="SSF53335">
    <property type="entry name" value="S-adenosyl-L-methionine-dependent methyltransferases"/>
    <property type="match status" value="1"/>
</dbReference>
<dbReference type="PROSITE" id="PS00455">
    <property type="entry name" value="AMP_BINDING"/>
    <property type="match status" value="1"/>
</dbReference>
<dbReference type="PROSITE" id="PS50075">
    <property type="entry name" value="CARRIER"/>
    <property type="match status" value="1"/>
</dbReference>
<dbReference type="PROSITE" id="PS00012">
    <property type="entry name" value="PHOSPHOPANTETHEINE"/>
    <property type="match status" value="1"/>
</dbReference>
<gene>
    <name evidence="5" type="primary">pchE</name>
    <name evidence="8" type="ordered locus">PA4226</name>
</gene>
<accession>G3XCV2</accession>
<accession>O85739</accession>
<accession>Q7DC78</accession>
<proteinExistence type="evidence at protein level"/>
<name>PCHE_PSEAE</name>
<sequence>MDLPPDSRTALRDWLTEQLADLLGEPLADVRALADDDDLLGCGLDSIRLMYLQERLRARGSTLDFAQLAQRPCLGAWLDLLACADRLSAPATVALPTAQDRDQPFELSSVQQAYWLGRGAGEVLGNVSCHAFLEFRTRDVDPQRLAAAAECVRQRHPMLRARFLDGRQQILPTPPLSCFDLQDWRTLQVDEAERDWQALRDWRAHECLAVERGQVFLLGLVRMPGGEDRLWLSLDLLAADVESLRLLLAELGVAYLAPERLAEPPALHFADYLAHRAAQRAEAAARARDYWLERLPRLPDAPALPLACAPESIRQPRTRRLAFQLSAGESRRLERLAAQHGVTLSSVFGCAFALVLARWSESAEFLLNVPLFDRHADDPRIGEVIADFTTLLLLECRMQAGVSFAEAVKSFQRNLHGAIDHAAFPALEVLREARRQGQPRSAPVVFASNLGEEGFVPAAFRDAFGDLHDMLSQTPQVWLDHQLYRVGDGILLAWDSVVGLFPEGLPETMFEAYVGLLQRLCDSAWGQPADLPLPWAQQARRALLNGQPACATARTLHRDFFLRAAEAPDADALLYRDQRVTRGELAERALRIAGGLREAGVRPGDAVEVSLPRGPQQVAAVFGVLAAGACYVPLDIDQPPARRRLIEEAAGVCLAITEEDDPQALPPRLDVQRLLRGPALAAPVPLAPQASAYVIYTSGSTGVPKGVEVSHAAAINTIDALLDLLRVNASDRLLAVSALDFDLSVFDLFGGLGAGASLVLPAQEQARDAAAWAEAIQRHAVSLWNSAPALLEMALSLPASQADYRSLRAVLLSGDWVALDLPGRLRPRCAEGCRLHVLGGATEAGIWSNLQSVDTVPPHWRSIPYGRPLPGQAYRVVDTHGRDVPDLVVGELWIGGASLARGYRNDPELSARRFVHDAQGRWYRTGDRGRYWGDGTLEFLGRVDQQVKVRGQRIELGEVEAALCAQAGVESACAAVLGGGVASLGAVLVPRLAPRAEGSMDLPAAQPFAGLAEAEAVLTREILGALLEAPLELDDGLRRRWLDWLADSAASALPSLDEALRRLGWQAAGLTAMGNALRGLLAGEQAPAALLLDPWLAPQAVAARLPDGREALARLLEALPTPAAGERLRVAVLDTRAGLWLDQGMASLLRPGLELTLFERSRVLLDAAATRLPERIVVQALDDGLLPAEHLGRYDRVISFAALHAYEASREGLALAAALLRPQGRLLLVDLLCESPLALLGAALLDDRPLRLAELPSLLADLAAAGLAPRCLWRSERIALVEALAPGLGLDAAALQAGLEQRLPQAMRPERLWCLPSLPLNGNGKVDRRRLAESMTRALGECRHEPSAEEPLEAHEQALAECWEAVLKRPVRRREASFFSLGGDSLLATRLLAGIRERFGVRLGMADFYRQPTLAGLARHLQVQTVEIEETQLEEGVL</sequence>
<feature type="chain" id="PRO_0000454826" description="Pyochelin synthetase PchE">
    <location>
        <begin position="1"/>
        <end position="1438"/>
    </location>
</feature>
<feature type="domain" description="Carrier 1" evidence="2">
    <location>
        <begin position="6"/>
        <end position="85"/>
    </location>
</feature>
<feature type="domain" description="Carrier 2" evidence="2">
    <location>
        <begin position="1350"/>
        <end position="1425"/>
    </location>
</feature>
<feature type="region of interest" description="Condensation/cyclization" evidence="6">
    <location>
        <begin position="136"/>
        <end position="442"/>
    </location>
</feature>
<feature type="region of interest" description="Adenylation" evidence="6">
    <location>
        <begin position="563"/>
        <end position="950"/>
    </location>
</feature>
<feature type="modified residue" description="O-(pantetheine 4'-phosphoryl)serine" evidence="2">
    <location>
        <position position="46"/>
    </location>
</feature>
<feature type="modified residue" description="O-(pantetheine 4'-phosphoryl)serine" evidence="2">
    <location>
        <position position="1385"/>
    </location>
</feature>
<feature type="helix" evidence="9">
    <location>
        <begin position="8"/>
        <end position="23"/>
    </location>
</feature>
<feature type="helix" evidence="9">
    <location>
        <begin position="27"/>
        <end position="32"/>
    </location>
</feature>
<feature type="strand" evidence="10">
    <location>
        <begin position="37"/>
        <end position="39"/>
    </location>
</feature>
<feature type="helix" evidence="9">
    <location>
        <begin position="40"/>
        <end position="42"/>
    </location>
</feature>
<feature type="helix" evidence="9">
    <location>
        <begin position="46"/>
        <end position="59"/>
    </location>
</feature>
<feature type="helix" evidence="9">
    <location>
        <begin position="65"/>
        <end position="70"/>
    </location>
</feature>
<feature type="helix" evidence="9">
    <location>
        <begin position="74"/>
        <end position="87"/>
    </location>
</feature>
<feature type="helix" evidence="9">
    <location>
        <begin position="109"/>
        <end position="117"/>
    </location>
</feature>
<feature type="strand" evidence="9">
    <location>
        <begin position="130"/>
        <end position="134"/>
    </location>
</feature>
<feature type="helix" evidence="9">
    <location>
        <begin position="142"/>
        <end position="155"/>
    </location>
</feature>
<feature type="helix" evidence="9">
    <location>
        <begin position="157"/>
        <end position="160"/>
    </location>
</feature>
<feature type="strand" evidence="9">
    <location>
        <begin position="161"/>
        <end position="164"/>
    </location>
</feature>
<feature type="strand" evidence="9">
    <location>
        <begin position="167"/>
        <end position="170"/>
    </location>
</feature>
<feature type="strand" evidence="9">
    <location>
        <begin position="178"/>
        <end position="183"/>
    </location>
</feature>
<feature type="helix" evidence="9">
    <location>
        <begin position="189"/>
        <end position="203"/>
    </location>
</feature>
<feature type="helix" evidence="9">
    <location>
        <begin position="210"/>
        <end position="212"/>
    </location>
</feature>
<feature type="strand" evidence="9">
    <location>
        <begin position="215"/>
        <end position="223"/>
    </location>
</feature>
<feature type="turn" evidence="9">
    <location>
        <begin position="224"/>
        <end position="226"/>
    </location>
</feature>
<feature type="strand" evidence="9">
    <location>
        <begin position="227"/>
        <end position="235"/>
    </location>
</feature>
<feature type="turn" evidence="9">
    <location>
        <begin position="236"/>
        <end position="238"/>
    </location>
</feature>
<feature type="helix" evidence="9">
    <location>
        <begin position="241"/>
        <end position="256"/>
    </location>
</feature>
<feature type="helix" evidence="9">
    <location>
        <begin position="258"/>
        <end position="260"/>
    </location>
</feature>
<feature type="helix" evidence="9">
    <location>
        <begin position="269"/>
        <end position="294"/>
    </location>
</feature>
<feature type="helix" evidence="9">
    <location>
        <begin position="295"/>
        <end position="297"/>
    </location>
</feature>
<feature type="helix" evidence="9">
    <location>
        <begin position="310"/>
        <end position="312"/>
    </location>
</feature>
<feature type="strand" evidence="9">
    <location>
        <begin position="318"/>
        <end position="325"/>
    </location>
</feature>
<feature type="helix" evidence="9">
    <location>
        <begin position="327"/>
        <end position="339"/>
    </location>
</feature>
<feature type="helix" evidence="9">
    <location>
        <begin position="344"/>
        <end position="359"/>
    </location>
</feature>
<feature type="strand" evidence="9">
    <location>
        <begin position="360"/>
        <end position="372"/>
    </location>
</feature>
<feature type="helix" evidence="9">
    <location>
        <begin position="379"/>
        <end position="383"/>
    </location>
</feature>
<feature type="strand" evidence="9">
    <location>
        <begin position="389"/>
        <end position="397"/>
    </location>
</feature>
<feature type="strand" evidence="9">
    <location>
        <begin position="400"/>
        <end position="403"/>
    </location>
</feature>
<feature type="helix" evidence="9">
    <location>
        <begin position="404"/>
        <end position="421"/>
    </location>
</feature>
<feature type="helix" evidence="9">
    <location>
        <begin position="426"/>
        <end position="435"/>
    </location>
</feature>
<feature type="strand" evidence="9">
    <location>
        <begin position="444"/>
        <end position="446"/>
    </location>
</feature>
<feature type="helix" evidence="9">
    <location>
        <begin position="458"/>
        <end position="463"/>
    </location>
</feature>
<feature type="strand" evidence="9">
    <location>
        <begin position="469"/>
        <end position="472"/>
    </location>
</feature>
<feature type="strand" evidence="9">
    <location>
        <begin position="478"/>
        <end position="484"/>
    </location>
</feature>
<feature type="strand" evidence="9">
    <location>
        <begin position="489"/>
        <end position="497"/>
    </location>
</feature>
<feature type="turn" evidence="9">
    <location>
        <begin position="498"/>
        <end position="500"/>
    </location>
</feature>
<feature type="helix" evidence="9">
    <location>
        <begin position="505"/>
        <end position="522"/>
    </location>
</feature>
<feature type="strand" evidence="9">
    <location>
        <begin position="527"/>
        <end position="530"/>
    </location>
</feature>
<feature type="helix" evidence="9">
    <location>
        <begin position="535"/>
        <end position="545"/>
    </location>
</feature>
<feature type="helix" evidence="9">
    <location>
        <begin position="558"/>
        <end position="566"/>
    </location>
</feature>
<feature type="strand" evidence="9">
    <location>
        <begin position="570"/>
        <end position="574"/>
    </location>
</feature>
<feature type="strand" evidence="9">
    <location>
        <begin position="579"/>
        <end position="581"/>
    </location>
</feature>
<feature type="helix" evidence="9">
    <location>
        <begin position="582"/>
        <end position="598"/>
    </location>
</feature>
<feature type="strand" evidence="9">
    <location>
        <begin position="606"/>
        <end position="609"/>
    </location>
</feature>
<feature type="helix" evidence="9">
    <location>
        <begin position="615"/>
        <end position="626"/>
    </location>
</feature>
<feature type="strand" evidence="9">
    <location>
        <begin position="630"/>
        <end position="633"/>
    </location>
</feature>
<feature type="helix" evidence="9">
    <location>
        <begin position="640"/>
        <end position="650"/>
    </location>
</feature>
<feature type="strand" evidence="9">
    <location>
        <begin position="653"/>
        <end position="659"/>
    </location>
</feature>
<feature type="strand" evidence="9">
    <location>
        <begin position="664"/>
        <end position="666"/>
    </location>
</feature>
<feature type="strand" evidence="9">
    <location>
        <begin position="668"/>
        <end position="670"/>
    </location>
</feature>
<feature type="helix" evidence="9">
    <location>
        <begin position="671"/>
        <end position="675"/>
    </location>
</feature>
<feature type="strand" evidence="9">
    <location>
        <begin position="690"/>
        <end position="697"/>
    </location>
</feature>
<feature type="strand" evidence="10">
    <location>
        <begin position="701"/>
        <end position="703"/>
    </location>
</feature>
<feature type="strand" evidence="9">
    <location>
        <begin position="705"/>
        <end position="710"/>
    </location>
</feature>
<feature type="helix" evidence="9">
    <location>
        <begin position="711"/>
        <end position="725"/>
    </location>
</feature>
<feature type="strand" evidence="9">
    <location>
        <begin position="732"/>
        <end position="734"/>
    </location>
</feature>
<feature type="helix" evidence="9">
    <location>
        <begin position="743"/>
        <end position="749"/>
    </location>
</feature>
<feature type="turn" evidence="9">
    <location>
        <begin position="750"/>
        <end position="755"/>
    </location>
</feature>
<feature type="strand" evidence="9">
    <location>
        <begin position="757"/>
        <end position="759"/>
    </location>
</feature>
<feature type="helix" evidence="9">
    <location>
        <begin position="763"/>
        <end position="765"/>
    </location>
</feature>
<feature type="helix" evidence="9">
    <location>
        <begin position="769"/>
        <end position="779"/>
    </location>
</feature>
<feature type="strand" evidence="9">
    <location>
        <begin position="783"/>
        <end position="786"/>
    </location>
</feature>
<feature type="helix" evidence="9">
    <location>
        <begin position="788"/>
        <end position="795"/>
    </location>
</feature>
<feature type="turn" evidence="9">
    <location>
        <begin position="799"/>
        <end position="801"/>
    </location>
</feature>
<feature type="strand" evidence="9">
    <location>
        <begin position="809"/>
        <end position="815"/>
    </location>
</feature>
<feature type="helix" evidence="9">
    <location>
        <begin position="821"/>
        <end position="825"/>
    </location>
</feature>
<feature type="turn" evidence="9">
    <location>
        <begin position="826"/>
        <end position="828"/>
    </location>
</feature>
<feature type="strand" evidence="9">
    <location>
        <begin position="835"/>
        <end position="839"/>
    </location>
</feature>
<feature type="helix" evidence="9">
    <location>
        <begin position="842"/>
        <end position="844"/>
    </location>
</feature>
<feature type="strand" evidence="9">
    <location>
        <begin position="849"/>
        <end position="852"/>
    </location>
</feature>
<feature type="strand" evidence="9">
    <location>
        <begin position="872"/>
        <end position="877"/>
    </location>
</feature>
<feature type="strand" evidence="10">
    <location>
        <begin position="881"/>
        <end position="883"/>
    </location>
</feature>
<feature type="strand" evidence="9">
    <location>
        <begin position="890"/>
        <end position="896"/>
    </location>
</feature>
<feature type="strand" evidence="9">
    <location>
        <begin position="901"/>
        <end position="903"/>
    </location>
</feature>
<feature type="helix" evidence="9">
    <location>
        <begin position="907"/>
        <end position="913"/>
    </location>
</feature>
<feature type="strand" evidence="9">
    <location>
        <begin position="914"/>
        <end position="917"/>
    </location>
</feature>
<feature type="strand" evidence="9">
    <location>
        <begin position="920"/>
        <end position="922"/>
    </location>
</feature>
<feature type="strand" evidence="9">
    <location>
        <begin position="927"/>
        <end position="931"/>
    </location>
</feature>
<feature type="strand" evidence="9">
    <location>
        <begin position="937"/>
        <end position="949"/>
    </location>
</feature>
<feature type="strand" evidence="9">
    <location>
        <begin position="952"/>
        <end position="955"/>
    </location>
</feature>
<feature type="helix" evidence="9">
    <location>
        <begin position="956"/>
        <end position="964"/>
    </location>
</feature>
<feature type="strand" evidence="9">
    <location>
        <begin position="969"/>
        <end position="976"/>
    </location>
</feature>
<feature type="turn" evidence="9">
    <location>
        <begin position="979"/>
        <end position="982"/>
    </location>
</feature>
<feature type="strand" evidence="9">
    <location>
        <begin position="984"/>
        <end position="990"/>
    </location>
</feature>
<feature type="helix" evidence="9">
    <location>
        <begin position="1009"/>
        <end position="1027"/>
    </location>
</feature>
<feature type="helix" evidence="9">
    <location>
        <begin position="1030"/>
        <end position="1032"/>
    </location>
</feature>
<feature type="helix" evidence="9">
    <location>
        <begin position="1035"/>
        <end position="1047"/>
    </location>
</feature>
<feature type="turn" evidence="9">
    <location>
        <begin position="1048"/>
        <end position="1050"/>
    </location>
</feature>
<feature type="strand" evidence="9">
    <location>
        <begin position="1051"/>
        <end position="1053"/>
    </location>
</feature>
<feature type="helix" evidence="9">
    <location>
        <begin position="1058"/>
        <end position="1063"/>
    </location>
</feature>
<feature type="helix" evidence="9">
    <location>
        <begin position="1067"/>
        <end position="1082"/>
    </location>
</feature>
<feature type="helix" evidence="9">
    <location>
        <begin position="1088"/>
        <end position="1092"/>
    </location>
</feature>
<feature type="turn" evidence="9">
    <location>
        <begin position="1094"/>
        <end position="1096"/>
    </location>
</feature>
<feature type="helix" evidence="9">
    <location>
        <begin position="1098"/>
        <end position="1102"/>
    </location>
</feature>
<feature type="turn" evidence="9">
    <location>
        <begin position="1103"/>
        <end position="1106"/>
    </location>
</feature>
<feature type="helix" evidence="9">
    <location>
        <begin position="1108"/>
        <end position="1116"/>
    </location>
</feature>
<feature type="helix" evidence="9">
    <location>
        <begin position="1121"/>
        <end position="1124"/>
    </location>
</feature>
<feature type="strand" evidence="9">
    <location>
        <begin position="1128"/>
        <end position="1133"/>
    </location>
</feature>
<feature type="turn" evidence="9">
    <location>
        <begin position="1136"/>
        <end position="1138"/>
    </location>
</feature>
<feature type="helix" evidence="9">
    <location>
        <begin position="1139"/>
        <end position="1148"/>
    </location>
</feature>
<feature type="strand" evidence="9">
    <location>
        <begin position="1153"/>
        <end position="1157"/>
    </location>
</feature>
<feature type="helix" evidence="9">
    <location>
        <begin position="1162"/>
        <end position="1171"/>
    </location>
</feature>
<feature type="strand" evidence="9">
    <location>
        <begin position="1176"/>
        <end position="1178"/>
    </location>
</feature>
<feature type="helix" evidence="9">
    <location>
        <begin position="1182"/>
        <end position="1184"/>
    </location>
</feature>
<feature type="helix" evidence="9">
    <location>
        <begin position="1188"/>
        <end position="1190"/>
    </location>
</feature>
<feature type="turn" evidence="10">
    <location>
        <begin position="1191"/>
        <end position="1193"/>
    </location>
</feature>
<feature type="strand" evidence="9">
    <location>
        <begin position="1194"/>
        <end position="1201"/>
    </location>
</feature>
<feature type="turn" evidence="9">
    <location>
        <begin position="1203"/>
        <end position="1205"/>
    </location>
</feature>
<feature type="helix" evidence="9">
    <location>
        <begin position="1209"/>
        <end position="1219"/>
    </location>
</feature>
<feature type="strand" evidence="9">
    <location>
        <begin position="1220"/>
        <end position="1233"/>
    </location>
</feature>
<feature type="helix" evidence="9">
    <location>
        <begin position="1236"/>
        <end position="1245"/>
    </location>
</feature>
<feature type="helix" evidence="9">
    <location>
        <begin position="1249"/>
        <end position="1251"/>
    </location>
</feature>
<feature type="helix" evidence="9">
    <location>
        <begin position="1255"/>
        <end position="1264"/>
    </location>
</feature>
<feature type="strand" evidence="9">
    <location>
        <begin position="1268"/>
        <end position="1271"/>
    </location>
</feature>
<feature type="turn" evidence="9">
    <location>
        <begin position="1275"/>
        <end position="1277"/>
    </location>
</feature>
<feature type="strand" evidence="9">
    <location>
        <begin position="1278"/>
        <end position="1284"/>
    </location>
</feature>
<feature type="helix" evidence="9">
    <location>
        <begin position="1292"/>
        <end position="1302"/>
    </location>
</feature>
<feature type="turn" evidence="9">
    <location>
        <begin position="1305"/>
        <end position="1307"/>
    </location>
</feature>
<feature type="strand" evidence="9">
    <location>
        <begin position="1310"/>
        <end position="1314"/>
    </location>
</feature>
<feature type="strand" evidence="9">
    <location>
        <begin position="1324"/>
        <end position="1326"/>
    </location>
</feature>
<feature type="helix" evidence="9">
    <location>
        <begin position="1328"/>
        <end position="1339"/>
    </location>
</feature>
<feature type="helix" evidence="10">
    <location>
        <begin position="1354"/>
        <end position="1367"/>
    </location>
</feature>
<feature type="helix" evidence="10">
    <location>
        <begin position="1378"/>
        <end position="1381"/>
    </location>
</feature>
<feature type="helix" evidence="10">
    <location>
        <begin position="1385"/>
        <end position="1398"/>
    </location>
</feature>
<feature type="helix" evidence="10">
    <location>
        <begin position="1405"/>
        <end position="1410"/>
    </location>
</feature>
<feature type="helix" evidence="10">
    <location>
        <begin position="1414"/>
        <end position="1422"/>
    </location>
</feature>
<comment type="function">
    <text evidence="1 3 4">Involved in the biosynthesis of the siderophore pyochelin (PubMed:11208777, PubMed:9846750). Accepts salicylate activated by PchD at the first peptidyl carrier domain (ArCP), and activates and fixes one molecule of cysteine at the second peptidyl carrier domain (PCP1) via a thioester linkage to the phosphopanthetheine moiety (By similarity). Then catalyzes the condensation reaction between the salicylate bound to the first site and the cysteine bound to the second site, and the cyclization of the cysteine to form the salicyl-thiazolinyl-S-PCP1 intermediate at the second site (By similarity). When this intermediate is released by the action of a thioesterase, it produces the antifungal antibiotic dihydroaeruginoic acid (Dha or hydroxyphenyl-thiazolinyl-carboxylate) (PubMed:11208777).</text>
</comment>
<comment type="catalytic activity">
    <reaction evidence="7">
        <text>holo-[peptidyl-carrier protein] + L-cysteine + ATP = L-cysteinyl-[peptidyl-carrier protein] + AMP + diphosphate</text>
        <dbReference type="Rhea" id="RHEA:61680"/>
        <dbReference type="Rhea" id="RHEA-COMP:11480"/>
        <dbReference type="Rhea" id="RHEA-COMP:15906"/>
        <dbReference type="ChEBI" id="CHEBI:30616"/>
        <dbReference type="ChEBI" id="CHEBI:33019"/>
        <dbReference type="ChEBI" id="CHEBI:35235"/>
        <dbReference type="ChEBI" id="CHEBI:64479"/>
        <dbReference type="ChEBI" id="CHEBI:144926"/>
        <dbReference type="ChEBI" id="CHEBI:456215"/>
        <dbReference type="EC" id="6.2.1.69"/>
    </reaction>
    <physiologicalReaction direction="left-to-right" evidence="7">
        <dbReference type="Rhea" id="RHEA:61681"/>
    </physiologicalReaction>
</comment>
<comment type="cofactor">
    <cofactor evidence="6">
        <name>pantetheine 4'-phosphate</name>
        <dbReference type="ChEBI" id="CHEBI:47942"/>
    </cofactor>
</comment>
<comment type="pathway">
    <text evidence="3 4">Siderophore biosynthesis.</text>
</comment>
<comment type="pathway">
    <text evidence="3 4">Antifungal biosynthesis.</text>
</comment>
<comment type="induction">
    <text evidence="4">Expression of the pchEF operon is strictly dependent on the PchR regulator and is induced by extracellular pyochelin, the end product of the pathway. Repressed by Fur and iron.</text>
</comment>
<comment type="domain">
    <text evidence="1">Modular protein that contains an aryl carrier protein (ArCP) domain which bears a phosphopantetheinyl arm to attach the activated salicylic acid, a condensation/cyclization domain involved in the cyclization of the cysteine, an adenylation domain which activates the cysteine residue into an aminoacyl-AMP ester and a peptidyl carrier protein (PCP1) domain which bears a phosphopantetheinyl arm to attach the activated cysteine.</text>
</comment>
<comment type="disruption phenotype">
    <text evidence="4">Deletion of the gene completely abolishes the formation of both Dha and pyochelin and results in salicylate accumulation.</text>
</comment>
<comment type="similarity">
    <text evidence="6">Belongs to the NRP synthetase family.</text>
</comment>
<protein>
    <recommendedName>
        <fullName evidence="6">Pyochelin synthetase PchE</fullName>
        <ecNumber evidence="7">6.2.1.69</ecNumber>
    </recommendedName>
    <alternativeName>
        <fullName evidence="6">L-cysteine--[L-cysteinyl-carrier protein] ligase</fullName>
    </alternativeName>
    <alternativeName>
        <fullName evidence="6">Nonribosomal peptide synthetase PchE</fullName>
    </alternativeName>
</protein>
<evidence type="ECO:0000250" key="1">
    <source>
        <dbReference type="UniProtKB" id="A0A0H2ZGB9"/>
    </source>
</evidence>
<evidence type="ECO:0000255" key="2">
    <source>
        <dbReference type="PROSITE-ProRule" id="PRU00258"/>
    </source>
</evidence>
<evidence type="ECO:0000269" key="3">
    <source>
    </source>
</evidence>
<evidence type="ECO:0000269" key="4">
    <source>
    </source>
</evidence>
<evidence type="ECO:0000303" key="5">
    <source>
    </source>
</evidence>
<evidence type="ECO:0000305" key="6"/>
<evidence type="ECO:0000305" key="7">
    <source>
    </source>
</evidence>
<evidence type="ECO:0000312" key="8">
    <source>
        <dbReference type="EMBL" id="AAG07614.1"/>
    </source>
</evidence>
<evidence type="ECO:0007829" key="9">
    <source>
        <dbReference type="PDB" id="7EMY"/>
    </source>
</evidence>
<evidence type="ECO:0007829" key="10">
    <source>
        <dbReference type="PDB" id="7EN1"/>
    </source>
</evidence>
<organism>
    <name type="scientific">Pseudomonas aeruginosa (strain ATCC 15692 / DSM 22644 / CIP 104116 / JCM 14847 / LMG 12228 / 1C / PRS 101 / PAO1)</name>
    <dbReference type="NCBI Taxonomy" id="208964"/>
    <lineage>
        <taxon>Bacteria</taxon>
        <taxon>Pseudomonadati</taxon>
        <taxon>Pseudomonadota</taxon>
        <taxon>Gammaproteobacteria</taxon>
        <taxon>Pseudomonadales</taxon>
        <taxon>Pseudomonadaceae</taxon>
        <taxon>Pseudomonas</taxon>
    </lineage>
</organism>